<dbReference type="EC" id="2.7.1.167" evidence="1"/>
<dbReference type="EC" id="2.7.7.70" evidence="1"/>
<dbReference type="EMBL" id="CP001657">
    <property type="protein sequence ID" value="ACT14420.1"/>
    <property type="molecule type" value="Genomic_DNA"/>
</dbReference>
<dbReference type="RefSeq" id="WP_015841550.1">
    <property type="nucleotide sequence ID" value="NC_012917.1"/>
</dbReference>
<dbReference type="SMR" id="C6DDL3"/>
<dbReference type="STRING" id="561230.PC1_3404"/>
<dbReference type="GeneID" id="67792793"/>
<dbReference type="KEGG" id="pct:PC1_3404"/>
<dbReference type="eggNOG" id="COG0615">
    <property type="taxonomic scope" value="Bacteria"/>
</dbReference>
<dbReference type="eggNOG" id="COG2870">
    <property type="taxonomic scope" value="Bacteria"/>
</dbReference>
<dbReference type="HOGENOM" id="CLU_021150_2_1_6"/>
<dbReference type="OrthoDB" id="9802794at2"/>
<dbReference type="UniPathway" id="UPA00356">
    <property type="reaction ID" value="UER00437"/>
</dbReference>
<dbReference type="UniPathway" id="UPA00356">
    <property type="reaction ID" value="UER00439"/>
</dbReference>
<dbReference type="Proteomes" id="UP000002736">
    <property type="component" value="Chromosome"/>
</dbReference>
<dbReference type="GO" id="GO:0005829">
    <property type="term" value="C:cytosol"/>
    <property type="evidence" value="ECO:0007669"/>
    <property type="project" value="TreeGrafter"/>
</dbReference>
<dbReference type="GO" id="GO:0005524">
    <property type="term" value="F:ATP binding"/>
    <property type="evidence" value="ECO:0007669"/>
    <property type="project" value="UniProtKB-UniRule"/>
</dbReference>
<dbReference type="GO" id="GO:0033785">
    <property type="term" value="F:heptose 7-phosphate kinase activity"/>
    <property type="evidence" value="ECO:0007669"/>
    <property type="project" value="UniProtKB-UniRule"/>
</dbReference>
<dbReference type="GO" id="GO:0033786">
    <property type="term" value="F:heptose-1-phosphate adenylyltransferase activity"/>
    <property type="evidence" value="ECO:0007669"/>
    <property type="project" value="UniProtKB-UniRule"/>
</dbReference>
<dbReference type="GO" id="GO:0016773">
    <property type="term" value="F:phosphotransferase activity, alcohol group as acceptor"/>
    <property type="evidence" value="ECO:0007669"/>
    <property type="project" value="InterPro"/>
</dbReference>
<dbReference type="GO" id="GO:0097171">
    <property type="term" value="P:ADP-L-glycero-beta-D-manno-heptose biosynthetic process"/>
    <property type="evidence" value="ECO:0007669"/>
    <property type="project" value="UniProtKB-UniPathway"/>
</dbReference>
<dbReference type="CDD" id="cd01172">
    <property type="entry name" value="RfaE_like"/>
    <property type="match status" value="1"/>
</dbReference>
<dbReference type="FunFam" id="3.40.1190.20:FF:000002">
    <property type="entry name" value="Bifunctional protein HldE"/>
    <property type="match status" value="1"/>
</dbReference>
<dbReference type="FunFam" id="3.40.50.620:FF:000028">
    <property type="entry name" value="Bifunctional protein HldE"/>
    <property type="match status" value="1"/>
</dbReference>
<dbReference type="Gene3D" id="3.40.1190.20">
    <property type="match status" value="1"/>
</dbReference>
<dbReference type="Gene3D" id="3.40.50.620">
    <property type="entry name" value="HUPs"/>
    <property type="match status" value="1"/>
</dbReference>
<dbReference type="HAMAP" id="MF_01603">
    <property type="entry name" value="HldE"/>
    <property type="match status" value="1"/>
</dbReference>
<dbReference type="InterPro" id="IPR023030">
    <property type="entry name" value="Bifunc_HldE"/>
</dbReference>
<dbReference type="InterPro" id="IPR002173">
    <property type="entry name" value="Carboh/pur_kinase_PfkB_CS"/>
</dbReference>
<dbReference type="InterPro" id="IPR004821">
    <property type="entry name" value="Cyt_trans-like"/>
</dbReference>
<dbReference type="InterPro" id="IPR011611">
    <property type="entry name" value="PfkB_dom"/>
</dbReference>
<dbReference type="InterPro" id="IPR011913">
    <property type="entry name" value="RfaE_dom_I"/>
</dbReference>
<dbReference type="InterPro" id="IPR011914">
    <property type="entry name" value="RfaE_dom_II"/>
</dbReference>
<dbReference type="InterPro" id="IPR029056">
    <property type="entry name" value="Ribokinase-like"/>
</dbReference>
<dbReference type="InterPro" id="IPR014729">
    <property type="entry name" value="Rossmann-like_a/b/a_fold"/>
</dbReference>
<dbReference type="NCBIfam" id="TIGR00125">
    <property type="entry name" value="cyt_tran_rel"/>
    <property type="match status" value="1"/>
</dbReference>
<dbReference type="NCBIfam" id="NF008454">
    <property type="entry name" value="PRK11316.1"/>
    <property type="match status" value="1"/>
</dbReference>
<dbReference type="NCBIfam" id="TIGR02198">
    <property type="entry name" value="rfaE_dom_I"/>
    <property type="match status" value="1"/>
</dbReference>
<dbReference type="NCBIfam" id="TIGR02199">
    <property type="entry name" value="rfaE_dom_II"/>
    <property type="match status" value="1"/>
</dbReference>
<dbReference type="PANTHER" id="PTHR46969">
    <property type="entry name" value="BIFUNCTIONAL PROTEIN HLDE"/>
    <property type="match status" value="1"/>
</dbReference>
<dbReference type="PANTHER" id="PTHR46969:SF1">
    <property type="entry name" value="BIFUNCTIONAL PROTEIN HLDE"/>
    <property type="match status" value="1"/>
</dbReference>
<dbReference type="Pfam" id="PF01467">
    <property type="entry name" value="CTP_transf_like"/>
    <property type="match status" value="1"/>
</dbReference>
<dbReference type="Pfam" id="PF00294">
    <property type="entry name" value="PfkB"/>
    <property type="match status" value="1"/>
</dbReference>
<dbReference type="SUPFAM" id="SSF52374">
    <property type="entry name" value="Nucleotidylyl transferase"/>
    <property type="match status" value="1"/>
</dbReference>
<dbReference type="SUPFAM" id="SSF53613">
    <property type="entry name" value="Ribokinase-like"/>
    <property type="match status" value="1"/>
</dbReference>
<dbReference type="PROSITE" id="PS00583">
    <property type="entry name" value="PFKB_KINASES_1"/>
    <property type="match status" value="1"/>
</dbReference>
<name>HLDE_PECCP</name>
<keyword id="KW-0067">ATP-binding</keyword>
<keyword id="KW-0119">Carbohydrate metabolism</keyword>
<keyword id="KW-0418">Kinase</keyword>
<keyword id="KW-0511">Multifunctional enzyme</keyword>
<keyword id="KW-0547">Nucleotide-binding</keyword>
<keyword id="KW-0548">Nucleotidyltransferase</keyword>
<keyword id="KW-0808">Transferase</keyword>
<evidence type="ECO:0000255" key="1">
    <source>
        <dbReference type="HAMAP-Rule" id="MF_01603"/>
    </source>
</evidence>
<protein>
    <recommendedName>
        <fullName evidence="1">Bifunctional protein HldE</fullName>
    </recommendedName>
    <domain>
        <recommendedName>
            <fullName evidence="1">D-beta-D-heptose 7-phosphate kinase</fullName>
            <ecNumber evidence="1">2.7.1.167</ecNumber>
        </recommendedName>
        <alternativeName>
            <fullName evidence="1">D-beta-D-heptose 7-phosphotransferase</fullName>
        </alternativeName>
        <alternativeName>
            <fullName evidence="1">D-glycero-beta-D-manno-heptose-7-phosphate kinase</fullName>
        </alternativeName>
    </domain>
    <domain>
        <recommendedName>
            <fullName evidence="1">D-beta-D-heptose 1-phosphate adenylyltransferase</fullName>
            <ecNumber evidence="1">2.7.7.70</ecNumber>
        </recommendedName>
        <alternativeName>
            <fullName evidence="1">D-glycero-beta-D-manno-heptose 1-phosphate adenylyltransferase</fullName>
        </alternativeName>
    </domain>
</protein>
<accession>C6DDL3</accession>
<comment type="function">
    <text evidence="1">Catalyzes the phosphorylation of D-glycero-D-manno-heptose 7-phosphate at the C-1 position to selectively form D-glycero-beta-D-manno-heptose-1,7-bisphosphate.</text>
</comment>
<comment type="function">
    <text evidence="1">Catalyzes the ADP transfer from ATP to D-glycero-beta-D-manno-heptose 1-phosphate, yielding ADP-D-glycero-beta-D-manno-heptose.</text>
</comment>
<comment type="catalytic activity">
    <reaction evidence="1">
        <text>D-glycero-beta-D-manno-heptose 7-phosphate + ATP = D-glycero-beta-D-manno-heptose 1,7-bisphosphate + ADP + H(+)</text>
        <dbReference type="Rhea" id="RHEA:27473"/>
        <dbReference type="ChEBI" id="CHEBI:15378"/>
        <dbReference type="ChEBI" id="CHEBI:30616"/>
        <dbReference type="ChEBI" id="CHEBI:60204"/>
        <dbReference type="ChEBI" id="CHEBI:60208"/>
        <dbReference type="ChEBI" id="CHEBI:456216"/>
        <dbReference type="EC" id="2.7.1.167"/>
    </reaction>
</comment>
<comment type="catalytic activity">
    <reaction evidence="1">
        <text>D-glycero-beta-D-manno-heptose 1-phosphate + ATP + H(+) = ADP-D-glycero-beta-D-manno-heptose + diphosphate</text>
        <dbReference type="Rhea" id="RHEA:27465"/>
        <dbReference type="ChEBI" id="CHEBI:15378"/>
        <dbReference type="ChEBI" id="CHEBI:30616"/>
        <dbReference type="ChEBI" id="CHEBI:33019"/>
        <dbReference type="ChEBI" id="CHEBI:59967"/>
        <dbReference type="ChEBI" id="CHEBI:61593"/>
        <dbReference type="EC" id="2.7.7.70"/>
    </reaction>
</comment>
<comment type="pathway">
    <text evidence="1">Nucleotide-sugar biosynthesis; ADP-L-glycero-beta-D-manno-heptose biosynthesis; ADP-L-glycero-beta-D-manno-heptose from D-glycero-beta-D-manno-heptose 7-phosphate: step 1/4.</text>
</comment>
<comment type="pathway">
    <text evidence="1">Nucleotide-sugar biosynthesis; ADP-L-glycero-beta-D-manno-heptose biosynthesis; ADP-L-glycero-beta-D-manno-heptose from D-glycero-beta-D-manno-heptose 7-phosphate: step 3/4.</text>
</comment>
<comment type="subunit">
    <text evidence="1">Homodimer.</text>
</comment>
<comment type="similarity">
    <text evidence="1">In the N-terminal section; belongs to the carbohydrate kinase PfkB family.</text>
</comment>
<comment type="similarity">
    <text evidence="1">In the C-terminal section; belongs to the cytidylyltransferase family.</text>
</comment>
<reference key="1">
    <citation type="submission" date="2009-07" db="EMBL/GenBank/DDBJ databases">
        <title>Complete sequence of Pectobacterium carotovorum subsp. carotovorum PC1.</title>
        <authorList>
            <consortium name="US DOE Joint Genome Institute"/>
            <person name="Lucas S."/>
            <person name="Copeland A."/>
            <person name="Lapidus A."/>
            <person name="Glavina del Rio T."/>
            <person name="Tice H."/>
            <person name="Bruce D."/>
            <person name="Goodwin L."/>
            <person name="Pitluck S."/>
            <person name="Munk A.C."/>
            <person name="Brettin T."/>
            <person name="Detter J.C."/>
            <person name="Han C."/>
            <person name="Tapia R."/>
            <person name="Larimer F."/>
            <person name="Land M."/>
            <person name="Hauser L."/>
            <person name="Kyrpides N."/>
            <person name="Mikhailova N."/>
            <person name="Balakrishnan V."/>
            <person name="Glasner J."/>
            <person name="Perna N.T."/>
        </authorList>
    </citation>
    <scope>NUCLEOTIDE SEQUENCE [LARGE SCALE GENOMIC DNA]</scope>
    <source>
        <strain>PC1</strain>
    </source>
</reference>
<sequence length="478" mass="50972">MKVTLPDFRQAGVLVVGDVMLDRYWYGPTSRISPEAPVPVVKVDTIEERPGGAANVAMNIAALGAGSRLVGLTGIDDAARALNAKLGEVNVKCDFVSVPTHPTITKLRVLSRNQQLIRLDFEEGFEGIDPQPIIERIQLALPKIGALVLSDYAKGALAHVQTMIQTAKAAGVPVLIDPKGTDFARYRGATLLTPNLSEFEAVAGRCKTEEELVERGMQLVADYELSALLITRSEQGMTLLQPGKAPLHLPTQAQEVYDVTGAGDTVIGVLAAALAAGNPLEEACFLANAAAGVVVGKLGTSTVTPIELENAIRGRADTGFGVMTEEQLKKAVELARQRGEKIVMTNGCFDILHAGHVSYLANARKLGDRLIVAVNSDASTKRLKGPTRPVNPLPQRMIVLGALEAVDWVVPFEEDTPQRLIASILPDILVKGGDYQPHEIAGSEEVWANGGEVKVLNFEDGCSTTNIINTIKANASKS</sequence>
<organism>
    <name type="scientific">Pectobacterium carotovorum subsp. carotovorum (strain PC1)</name>
    <dbReference type="NCBI Taxonomy" id="561230"/>
    <lineage>
        <taxon>Bacteria</taxon>
        <taxon>Pseudomonadati</taxon>
        <taxon>Pseudomonadota</taxon>
        <taxon>Gammaproteobacteria</taxon>
        <taxon>Enterobacterales</taxon>
        <taxon>Pectobacteriaceae</taxon>
        <taxon>Pectobacterium</taxon>
    </lineage>
</organism>
<proteinExistence type="inferred from homology"/>
<gene>
    <name evidence="1" type="primary">hldE</name>
    <name type="ordered locus">PC1_3404</name>
</gene>
<feature type="chain" id="PRO_1000215694" description="Bifunctional protein HldE">
    <location>
        <begin position="1"/>
        <end position="478"/>
    </location>
</feature>
<feature type="region of interest" description="Ribokinase">
    <location>
        <begin position="1"/>
        <end position="318"/>
    </location>
</feature>
<feature type="region of interest" description="Cytidylyltransferase">
    <location>
        <begin position="344"/>
        <end position="478"/>
    </location>
</feature>
<feature type="active site" evidence="1">
    <location>
        <position position="264"/>
    </location>
</feature>
<feature type="binding site" evidence="1">
    <location>
        <begin position="195"/>
        <end position="198"/>
    </location>
    <ligand>
        <name>ATP</name>
        <dbReference type="ChEBI" id="CHEBI:30616"/>
    </ligand>
</feature>